<feature type="chain" id="PRO_0000283203" description="F-box/kelch-repeat protein At2g43270">
    <location>
        <begin position="1"/>
        <end position="208"/>
    </location>
</feature>
<feature type="domain" description="F-box">
    <location>
        <begin position="1"/>
        <end position="44"/>
    </location>
</feature>
<feature type="repeat" description="Kelch">
    <location>
        <begin position="149"/>
        <end position="200"/>
    </location>
</feature>
<accession>Q1PEU9</accession>
<accession>O22843</accession>
<reference key="1">
    <citation type="journal article" date="1999" name="Nature">
        <title>Sequence and analysis of chromosome 2 of the plant Arabidopsis thaliana.</title>
        <authorList>
            <person name="Lin X."/>
            <person name="Kaul S."/>
            <person name="Rounsley S.D."/>
            <person name="Shea T.P."/>
            <person name="Benito M.-I."/>
            <person name="Town C.D."/>
            <person name="Fujii C.Y."/>
            <person name="Mason T.M."/>
            <person name="Bowman C.L."/>
            <person name="Barnstead M.E."/>
            <person name="Feldblyum T.V."/>
            <person name="Buell C.R."/>
            <person name="Ketchum K.A."/>
            <person name="Lee J.J."/>
            <person name="Ronning C.M."/>
            <person name="Koo H.L."/>
            <person name="Moffat K.S."/>
            <person name="Cronin L.A."/>
            <person name="Shen M."/>
            <person name="Pai G."/>
            <person name="Van Aken S."/>
            <person name="Umayam L."/>
            <person name="Tallon L.J."/>
            <person name="Gill J.E."/>
            <person name="Adams M.D."/>
            <person name="Carrera A.J."/>
            <person name="Creasy T.H."/>
            <person name="Goodman H.M."/>
            <person name="Somerville C.R."/>
            <person name="Copenhaver G.P."/>
            <person name="Preuss D."/>
            <person name="Nierman W.C."/>
            <person name="White O."/>
            <person name="Eisen J.A."/>
            <person name="Salzberg S.L."/>
            <person name="Fraser C.M."/>
            <person name="Venter J.C."/>
        </authorList>
    </citation>
    <scope>NUCLEOTIDE SEQUENCE [LARGE SCALE GENOMIC DNA]</scope>
    <source>
        <strain>cv. Columbia</strain>
    </source>
</reference>
<reference key="2">
    <citation type="journal article" date="2017" name="Plant J.">
        <title>Araport11: a complete reannotation of the Arabidopsis thaliana reference genome.</title>
        <authorList>
            <person name="Cheng C.Y."/>
            <person name="Krishnakumar V."/>
            <person name="Chan A.P."/>
            <person name="Thibaud-Nissen F."/>
            <person name="Schobel S."/>
            <person name="Town C.D."/>
        </authorList>
    </citation>
    <scope>GENOME REANNOTATION</scope>
    <source>
        <strain>cv. Columbia</strain>
    </source>
</reference>
<reference key="3">
    <citation type="journal article" date="2006" name="Plant Biotechnol. J.">
        <title>Simultaneous high-throughput recombinational cloning of open reading frames in closed and open configurations.</title>
        <authorList>
            <person name="Underwood B.A."/>
            <person name="Vanderhaeghen R."/>
            <person name="Whitford R."/>
            <person name="Town C.D."/>
            <person name="Hilson P."/>
        </authorList>
    </citation>
    <scope>NUCLEOTIDE SEQUENCE [LARGE SCALE MRNA]</scope>
    <source>
        <strain>cv. Columbia</strain>
    </source>
</reference>
<gene>
    <name type="ordered locus">At2g43270</name>
    <name type="ORF">F14B2.25</name>
</gene>
<dbReference type="EMBL" id="AC002335">
    <property type="protein sequence ID" value="AAB64309.2"/>
    <property type="status" value="ALT_SEQ"/>
    <property type="molecule type" value="Genomic_DNA"/>
</dbReference>
<dbReference type="EMBL" id="AC004450">
    <property type="protein sequence ID" value="AAM14936.1"/>
    <property type="status" value="ALT_SEQ"/>
    <property type="molecule type" value="Genomic_DNA"/>
</dbReference>
<dbReference type="EMBL" id="CP002685">
    <property type="protein sequence ID" value="AEC10246.1"/>
    <property type="molecule type" value="Genomic_DNA"/>
</dbReference>
<dbReference type="EMBL" id="DQ446618">
    <property type="protein sequence ID" value="ABE65902.1"/>
    <property type="molecule type" value="mRNA"/>
</dbReference>
<dbReference type="PIR" id="B84864">
    <property type="entry name" value="B84864"/>
</dbReference>
<dbReference type="RefSeq" id="NP_001189741.1">
    <molecule id="Q1PEU9-1"/>
    <property type="nucleotide sequence ID" value="NM_001202812.2"/>
</dbReference>
<dbReference type="RefSeq" id="NP_181856.1">
    <property type="nucleotide sequence ID" value="NM_129889.1"/>
</dbReference>
<dbReference type="SMR" id="Q1PEU9"/>
<dbReference type="BioGRID" id="4266">
    <property type="interactions" value="1"/>
</dbReference>
<dbReference type="FunCoup" id="Q1PEU9">
    <property type="interactions" value="34"/>
</dbReference>
<dbReference type="STRING" id="3702.Q1PEU9"/>
<dbReference type="PaxDb" id="3702-AT2G43270.1"/>
<dbReference type="EnsemblPlants" id="AT2G43270.2">
    <molecule id="Q1PEU9-1"/>
    <property type="protein sequence ID" value="AT2G43270.2"/>
    <property type="gene ID" value="AT2G43270"/>
</dbReference>
<dbReference type="GeneID" id="818929"/>
<dbReference type="Gramene" id="AT2G43270.2">
    <molecule id="Q1PEU9-1"/>
    <property type="protein sequence ID" value="AT2G43270.2"/>
    <property type="gene ID" value="AT2G43270"/>
</dbReference>
<dbReference type="KEGG" id="ath:AT2G43270"/>
<dbReference type="Araport" id="AT2G43270"/>
<dbReference type="TAIR" id="AT2G43270"/>
<dbReference type="HOGENOM" id="CLU_113046_0_0_1"/>
<dbReference type="InParanoid" id="Q1PEU9"/>
<dbReference type="PhylomeDB" id="Q1PEU9"/>
<dbReference type="PRO" id="PR:Q1PEU9"/>
<dbReference type="Proteomes" id="UP000006548">
    <property type="component" value="Chromosome 2"/>
</dbReference>
<dbReference type="ExpressionAtlas" id="Q1PEU9">
    <property type="expression patterns" value="baseline and differential"/>
</dbReference>
<dbReference type="CDD" id="cd22157">
    <property type="entry name" value="F-box_AtFBW1-like"/>
    <property type="match status" value="1"/>
</dbReference>
<dbReference type="Gene3D" id="1.20.1280.50">
    <property type="match status" value="1"/>
</dbReference>
<dbReference type="InterPro" id="IPR036047">
    <property type="entry name" value="F-box-like_dom_sf"/>
</dbReference>
<dbReference type="InterPro" id="IPR001810">
    <property type="entry name" value="F-box_dom"/>
</dbReference>
<dbReference type="InterPro" id="IPR050796">
    <property type="entry name" value="SCF_F-box_component"/>
</dbReference>
<dbReference type="PANTHER" id="PTHR31672">
    <property type="entry name" value="BNACNNG10540D PROTEIN"/>
    <property type="match status" value="1"/>
</dbReference>
<dbReference type="PANTHER" id="PTHR31672:SF13">
    <property type="entry name" value="F-BOX PROTEIN CPR30-LIKE"/>
    <property type="match status" value="1"/>
</dbReference>
<dbReference type="Pfam" id="PF00646">
    <property type="entry name" value="F-box"/>
    <property type="match status" value="1"/>
</dbReference>
<dbReference type="SMART" id="SM00256">
    <property type="entry name" value="FBOX"/>
    <property type="match status" value="1"/>
</dbReference>
<dbReference type="SUPFAM" id="SSF81383">
    <property type="entry name" value="F-box domain"/>
    <property type="match status" value="1"/>
</dbReference>
<keyword id="KW-0025">Alternative splicing</keyword>
<keyword id="KW-0880">Kelch repeat</keyword>
<keyword id="KW-1185">Reference proteome</keyword>
<sequence>MIYVVPDLLEEIFLGLPLKSILRFKTVSKQWRSILESKSFAERRLNVEKKEKILAVGDRTELGFEGEEEIQMVYLHCDIDATRPSLTCEGLVCIPAPGWINVLNPSTRQLRRFPCSPNHHVPSDRIRFQFRDELYLTSFPGNWEMGFGRDKFNGSYKVVRMCFSPVEKCEVLDVETGEWSELNPPPNDIDVGRKSVCVNGSIYWLKNV</sequence>
<protein>
    <recommendedName>
        <fullName>F-box/kelch-repeat protein At2g43270</fullName>
    </recommendedName>
</protein>
<name>FBK43_ARATH</name>
<proteinExistence type="evidence at transcript level"/>
<evidence type="ECO:0000305" key="1"/>
<comment type="alternative products">
    <event type="alternative splicing"/>
    <isoform>
        <id>Q1PEU9-1</id>
        <name>1</name>
        <sequence type="displayed"/>
    </isoform>
    <text>A number of isoforms are produced. According to EST sequences.</text>
</comment>
<comment type="sequence caution" evidence="1">
    <conflict type="erroneous gene model prediction">
        <sequence resource="EMBL-CDS" id="AAB64309"/>
    </conflict>
</comment>
<comment type="sequence caution" evidence="1">
    <conflict type="erroneous gene model prediction">
        <sequence resource="EMBL-CDS" id="AAM14936"/>
    </conflict>
</comment>
<organism>
    <name type="scientific">Arabidopsis thaliana</name>
    <name type="common">Mouse-ear cress</name>
    <dbReference type="NCBI Taxonomy" id="3702"/>
    <lineage>
        <taxon>Eukaryota</taxon>
        <taxon>Viridiplantae</taxon>
        <taxon>Streptophyta</taxon>
        <taxon>Embryophyta</taxon>
        <taxon>Tracheophyta</taxon>
        <taxon>Spermatophyta</taxon>
        <taxon>Magnoliopsida</taxon>
        <taxon>eudicotyledons</taxon>
        <taxon>Gunneridae</taxon>
        <taxon>Pentapetalae</taxon>
        <taxon>rosids</taxon>
        <taxon>malvids</taxon>
        <taxon>Brassicales</taxon>
        <taxon>Brassicaceae</taxon>
        <taxon>Camelineae</taxon>
        <taxon>Arabidopsis</taxon>
    </lineage>
</organism>